<evidence type="ECO:0000255" key="1">
    <source>
        <dbReference type="HAMAP-Rule" id="MF_01825"/>
    </source>
</evidence>
<sequence>MKIVADENLAFTDYFFSEFGDIQYKAGRTLTHTDVQDAEALLVRSVTAVNESLIQNTALKYVGSATIGTDHLDIQALEKQGITWANAAGCNAQAVAEYVITALLHLDASLLEQQEKFTLGIVGLGNVGKRLAYMAQLLGWKVIGFDPYVQLDSIENVSFQTLLQQANAVSIHVPLTKKGEHATYHLFDEKAFAALQPNTILINSARGPVVKEAALIEDIQRTQRKVVLDVFEHEPVISEELLNMLALATPHIAGYSLEGKARGTQMIYEAFCQKFGYDINKRFETQLPACEDYFSGHDLKAVLKQKLSQIYDIAQDDANIRACVKEGKVEQKAFDLLRKNYPLRREWAAHGGPQA</sequence>
<proteinExistence type="inferred from homology"/>
<dbReference type="EC" id="1.1.1.290" evidence="1"/>
<dbReference type="EMBL" id="CP000863">
    <property type="protein sequence ID" value="ACC58193.1"/>
    <property type="molecule type" value="Genomic_DNA"/>
</dbReference>
<dbReference type="RefSeq" id="WP_000706093.1">
    <property type="nucleotide sequence ID" value="NZ_CP031380.1"/>
</dbReference>
<dbReference type="SMR" id="B2HX89"/>
<dbReference type="KEGG" id="abc:ACICU_02881"/>
<dbReference type="HOGENOM" id="CLU_019796_4_0_6"/>
<dbReference type="UniPathway" id="UPA00244">
    <property type="reaction ID" value="UER00310"/>
</dbReference>
<dbReference type="Proteomes" id="UP000008839">
    <property type="component" value="Chromosome"/>
</dbReference>
<dbReference type="GO" id="GO:0005737">
    <property type="term" value="C:cytoplasm"/>
    <property type="evidence" value="ECO:0007669"/>
    <property type="project" value="UniProtKB-SubCell"/>
</dbReference>
<dbReference type="GO" id="GO:0033711">
    <property type="term" value="F:4-phosphoerythronate dehydrogenase activity"/>
    <property type="evidence" value="ECO:0007669"/>
    <property type="project" value="UniProtKB-EC"/>
</dbReference>
<dbReference type="GO" id="GO:0051287">
    <property type="term" value="F:NAD binding"/>
    <property type="evidence" value="ECO:0007669"/>
    <property type="project" value="InterPro"/>
</dbReference>
<dbReference type="GO" id="GO:0046983">
    <property type="term" value="F:protein dimerization activity"/>
    <property type="evidence" value="ECO:0007669"/>
    <property type="project" value="InterPro"/>
</dbReference>
<dbReference type="GO" id="GO:0008615">
    <property type="term" value="P:pyridoxine biosynthetic process"/>
    <property type="evidence" value="ECO:0007669"/>
    <property type="project" value="UniProtKB-UniRule"/>
</dbReference>
<dbReference type="CDD" id="cd12158">
    <property type="entry name" value="ErythrP_dh"/>
    <property type="match status" value="1"/>
</dbReference>
<dbReference type="Gene3D" id="3.30.1370.170">
    <property type="match status" value="1"/>
</dbReference>
<dbReference type="Gene3D" id="3.40.50.720">
    <property type="entry name" value="NAD(P)-binding Rossmann-like Domain"/>
    <property type="match status" value="2"/>
</dbReference>
<dbReference type="HAMAP" id="MF_01825">
    <property type="entry name" value="PdxB"/>
    <property type="match status" value="1"/>
</dbReference>
<dbReference type="InterPro" id="IPR050418">
    <property type="entry name" value="D-iso_2-hydroxyacid_DH_PdxB"/>
</dbReference>
<dbReference type="InterPro" id="IPR006139">
    <property type="entry name" value="D-isomer_2_OHA_DH_cat_dom"/>
</dbReference>
<dbReference type="InterPro" id="IPR029752">
    <property type="entry name" value="D-isomer_DH_CS1"/>
</dbReference>
<dbReference type="InterPro" id="IPR006140">
    <property type="entry name" value="D-isomer_DH_NAD-bd"/>
</dbReference>
<dbReference type="InterPro" id="IPR020921">
    <property type="entry name" value="Erythronate-4-P_DHase"/>
</dbReference>
<dbReference type="InterPro" id="IPR024531">
    <property type="entry name" value="Erythronate-4-P_DHase_dimer"/>
</dbReference>
<dbReference type="InterPro" id="IPR036291">
    <property type="entry name" value="NAD(P)-bd_dom_sf"/>
</dbReference>
<dbReference type="InterPro" id="IPR038251">
    <property type="entry name" value="PdxB_dimer_sf"/>
</dbReference>
<dbReference type="PANTHER" id="PTHR43761:SF1">
    <property type="entry name" value="D-ISOMER SPECIFIC 2-HYDROXYACID DEHYDROGENASE CATALYTIC DOMAIN-CONTAINING PROTEIN-RELATED"/>
    <property type="match status" value="1"/>
</dbReference>
<dbReference type="PANTHER" id="PTHR43761">
    <property type="entry name" value="D-ISOMER SPECIFIC 2-HYDROXYACID DEHYDROGENASE FAMILY PROTEIN (AFU_ORTHOLOGUE AFUA_1G13630)"/>
    <property type="match status" value="1"/>
</dbReference>
<dbReference type="Pfam" id="PF00389">
    <property type="entry name" value="2-Hacid_dh"/>
    <property type="match status" value="1"/>
</dbReference>
<dbReference type="Pfam" id="PF02826">
    <property type="entry name" value="2-Hacid_dh_C"/>
    <property type="match status" value="1"/>
</dbReference>
<dbReference type="Pfam" id="PF11890">
    <property type="entry name" value="DUF3410"/>
    <property type="match status" value="1"/>
</dbReference>
<dbReference type="SUPFAM" id="SSF52283">
    <property type="entry name" value="Formate/glycerate dehydrogenase catalytic domain-like"/>
    <property type="match status" value="1"/>
</dbReference>
<dbReference type="SUPFAM" id="SSF51735">
    <property type="entry name" value="NAD(P)-binding Rossmann-fold domains"/>
    <property type="match status" value="1"/>
</dbReference>
<dbReference type="PROSITE" id="PS00065">
    <property type="entry name" value="D_2_HYDROXYACID_DH_1"/>
    <property type="match status" value="1"/>
</dbReference>
<keyword id="KW-0963">Cytoplasm</keyword>
<keyword id="KW-0520">NAD</keyword>
<keyword id="KW-0560">Oxidoreductase</keyword>
<keyword id="KW-0664">Pyridoxine biosynthesis</keyword>
<reference key="1">
    <citation type="journal article" date="2008" name="Antimicrob. Agents Chemother.">
        <title>Whole-genome pyrosequencing of an epidemic multidrug-resistant Acinetobacter baumannii strain belonging to the European clone II group.</title>
        <authorList>
            <person name="Iacono M."/>
            <person name="Villa L."/>
            <person name="Fortini D."/>
            <person name="Bordoni R."/>
            <person name="Imperi F."/>
            <person name="Bonnal R.J."/>
            <person name="Sicheritz-Ponten T."/>
            <person name="De Bellis G."/>
            <person name="Visca P."/>
            <person name="Cassone A."/>
            <person name="Carattoli A."/>
        </authorList>
    </citation>
    <scope>NUCLEOTIDE SEQUENCE [LARGE SCALE GENOMIC DNA]</scope>
    <source>
        <strain>ACICU</strain>
    </source>
</reference>
<comment type="function">
    <text evidence="1">Catalyzes the oxidation of erythronate-4-phosphate to 3-hydroxy-2-oxo-4-phosphonooxybutanoate.</text>
</comment>
<comment type="catalytic activity">
    <reaction evidence="1">
        <text>4-phospho-D-erythronate + NAD(+) = (R)-3-hydroxy-2-oxo-4-phosphooxybutanoate + NADH + H(+)</text>
        <dbReference type="Rhea" id="RHEA:18829"/>
        <dbReference type="ChEBI" id="CHEBI:15378"/>
        <dbReference type="ChEBI" id="CHEBI:57540"/>
        <dbReference type="ChEBI" id="CHEBI:57945"/>
        <dbReference type="ChEBI" id="CHEBI:58538"/>
        <dbReference type="ChEBI" id="CHEBI:58766"/>
        <dbReference type="EC" id="1.1.1.290"/>
    </reaction>
</comment>
<comment type="pathway">
    <text evidence="1">Cofactor biosynthesis; pyridoxine 5'-phosphate biosynthesis; pyridoxine 5'-phosphate from D-erythrose 4-phosphate: step 2/5.</text>
</comment>
<comment type="subunit">
    <text evidence="1">Homodimer.</text>
</comment>
<comment type="subcellular location">
    <subcellularLocation>
        <location evidence="1">Cytoplasm</location>
    </subcellularLocation>
</comment>
<comment type="similarity">
    <text evidence="1">Belongs to the D-isomer specific 2-hydroxyacid dehydrogenase family. PdxB subfamily.</text>
</comment>
<name>PDXB_ACIBC</name>
<feature type="chain" id="PRO_1000188253" description="Erythronate-4-phosphate dehydrogenase">
    <location>
        <begin position="1"/>
        <end position="355"/>
    </location>
</feature>
<feature type="active site" evidence="1">
    <location>
        <position position="206"/>
    </location>
</feature>
<feature type="active site" evidence="1">
    <location>
        <position position="234"/>
    </location>
</feature>
<feature type="active site" description="Proton donor" evidence="1">
    <location>
        <position position="251"/>
    </location>
</feature>
<feature type="binding site" evidence="1">
    <location>
        <position position="45"/>
    </location>
    <ligand>
        <name>substrate</name>
    </ligand>
</feature>
<feature type="binding site" evidence="1">
    <location>
        <position position="66"/>
    </location>
    <ligand>
        <name>substrate</name>
    </ligand>
</feature>
<feature type="binding site" evidence="1">
    <location>
        <position position="146"/>
    </location>
    <ligand>
        <name>NAD(+)</name>
        <dbReference type="ChEBI" id="CHEBI:57540"/>
    </ligand>
</feature>
<feature type="binding site" evidence="1">
    <location>
        <position position="229"/>
    </location>
    <ligand>
        <name>NAD(+)</name>
        <dbReference type="ChEBI" id="CHEBI:57540"/>
    </ligand>
</feature>
<feature type="binding site" evidence="1">
    <location>
        <position position="254"/>
    </location>
    <ligand>
        <name>NAD(+)</name>
        <dbReference type="ChEBI" id="CHEBI:57540"/>
    </ligand>
</feature>
<feature type="binding site" evidence="1">
    <location>
        <position position="255"/>
    </location>
    <ligand>
        <name>substrate</name>
    </ligand>
</feature>
<gene>
    <name evidence="1" type="primary">pdxB</name>
    <name type="ordered locus">ACICU_02881</name>
</gene>
<organism>
    <name type="scientific">Acinetobacter baumannii (strain ACICU)</name>
    <dbReference type="NCBI Taxonomy" id="405416"/>
    <lineage>
        <taxon>Bacteria</taxon>
        <taxon>Pseudomonadati</taxon>
        <taxon>Pseudomonadota</taxon>
        <taxon>Gammaproteobacteria</taxon>
        <taxon>Moraxellales</taxon>
        <taxon>Moraxellaceae</taxon>
        <taxon>Acinetobacter</taxon>
        <taxon>Acinetobacter calcoaceticus/baumannii complex</taxon>
    </lineage>
</organism>
<accession>B2HX89</accession>
<protein>
    <recommendedName>
        <fullName evidence="1">Erythronate-4-phosphate dehydrogenase</fullName>
        <ecNumber evidence="1">1.1.1.290</ecNumber>
    </recommendedName>
</protein>